<keyword id="KW-0966">Cell projection</keyword>
<keyword id="KW-0137">Centromere</keyword>
<keyword id="KW-0158">Chromosome</keyword>
<keyword id="KW-0963">Cytoplasm</keyword>
<keyword id="KW-0539">Nucleus</keyword>
<keyword id="KW-1185">Reference proteome</keyword>
<keyword id="KW-0678">Repressor</keyword>
<keyword id="KW-0810">Translation regulation</keyword>
<evidence type="ECO:0000250" key="1">
    <source>
        <dbReference type="UniProtKB" id="Q8NEJ9"/>
    </source>
</evidence>
<evidence type="ECO:0000250" key="2">
    <source>
        <dbReference type="UniProtKB" id="Q9DB96"/>
    </source>
</evidence>
<evidence type="ECO:0000256" key="3">
    <source>
        <dbReference type="SAM" id="MobiDB-lite"/>
    </source>
</evidence>
<evidence type="ECO:0000269" key="4">
    <source>
    </source>
</evidence>
<evidence type="ECO:0000305" key="5"/>
<gene>
    <name type="primary">ngdn-b</name>
</gene>
<dbReference type="EMBL" id="BC087522">
    <property type="protein sequence ID" value="AAH87522.1"/>
    <property type="molecule type" value="mRNA"/>
</dbReference>
<dbReference type="SMR" id="Q5M985"/>
<dbReference type="AGR" id="Xenbase:XB-GENE-946315"/>
<dbReference type="Xenbase" id="XB-GENE-946315">
    <property type="gene designation" value="ngdn.L"/>
</dbReference>
<dbReference type="Proteomes" id="UP000186698">
    <property type="component" value="Unplaced"/>
</dbReference>
<dbReference type="GO" id="GO:0030424">
    <property type="term" value="C:axon"/>
    <property type="evidence" value="ECO:0007669"/>
    <property type="project" value="UniProtKB-SubCell"/>
</dbReference>
<dbReference type="GO" id="GO:0000775">
    <property type="term" value="C:chromosome, centromeric region"/>
    <property type="evidence" value="ECO:0007669"/>
    <property type="project" value="UniProtKB-SubCell"/>
</dbReference>
<dbReference type="GO" id="GO:0005737">
    <property type="term" value="C:cytoplasm"/>
    <property type="evidence" value="ECO:0007669"/>
    <property type="project" value="UniProtKB-SubCell"/>
</dbReference>
<dbReference type="GO" id="GO:0030425">
    <property type="term" value="C:dendrite"/>
    <property type="evidence" value="ECO:0007669"/>
    <property type="project" value="UniProtKB-SubCell"/>
</dbReference>
<dbReference type="GO" id="GO:0030175">
    <property type="term" value="C:filopodium"/>
    <property type="evidence" value="ECO:0007669"/>
    <property type="project" value="UniProtKB-SubCell"/>
</dbReference>
<dbReference type="GO" id="GO:0005730">
    <property type="term" value="C:nucleolus"/>
    <property type="evidence" value="ECO:0000318"/>
    <property type="project" value="GO_Central"/>
</dbReference>
<dbReference type="GO" id="GO:0032040">
    <property type="term" value="C:small-subunit processome"/>
    <property type="evidence" value="ECO:0000250"/>
    <property type="project" value="UniProtKB"/>
</dbReference>
<dbReference type="GO" id="GO:0000462">
    <property type="term" value="P:maturation of SSU-rRNA from tricistronic rRNA transcript (SSU-rRNA, 5.8S rRNA, LSU-rRNA)"/>
    <property type="evidence" value="ECO:0000318"/>
    <property type="project" value="GO_Central"/>
</dbReference>
<dbReference type="GO" id="GO:0006417">
    <property type="term" value="P:regulation of translation"/>
    <property type="evidence" value="ECO:0007669"/>
    <property type="project" value="UniProtKB-KW"/>
</dbReference>
<dbReference type="GO" id="GO:0042274">
    <property type="term" value="P:ribosomal small subunit biogenesis"/>
    <property type="evidence" value="ECO:0000250"/>
    <property type="project" value="UniProtKB"/>
</dbReference>
<dbReference type="InterPro" id="IPR007146">
    <property type="entry name" value="Sas10/Utp3/C1D"/>
</dbReference>
<dbReference type="PANTHER" id="PTHR13237:SF9">
    <property type="entry name" value="NEUROGUIDIN"/>
    <property type="match status" value="1"/>
</dbReference>
<dbReference type="PANTHER" id="PTHR13237">
    <property type="entry name" value="SOMETHING ABOUT SILENCING PROTEIN 10-RELATED"/>
    <property type="match status" value="1"/>
</dbReference>
<dbReference type="Pfam" id="PF04000">
    <property type="entry name" value="Sas10_Utp3"/>
    <property type="match status" value="1"/>
</dbReference>
<organism>
    <name type="scientific">Xenopus laevis</name>
    <name type="common">African clawed frog</name>
    <dbReference type="NCBI Taxonomy" id="8355"/>
    <lineage>
        <taxon>Eukaryota</taxon>
        <taxon>Metazoa</taxon>
        <taxon>Chordata</taxon>
        <taxon>Craniata</taxon>
        <taxon>Vertebrata</taxon>
        <taxon>Euteleostomi</taxon>
        <taxon>Amphibia</taxon>
        <taxon>Batrachia</taxon>
        <taxon>Anura</taxon>
        <taxon>Pipoidea</taxon>
        <taxon>Pipidae</taxon>
        <taxon>Xenopodinae</taxon>
        <taxon>Xenopus</taxon>
        <taxon>Xenopus</taxon>
    </lineage>
</organism>
<sequence length="316" mass="36067">AAAGDVILEDVPGSVNLFNTLQDQITKVTAHVQDLTQKVRSSIYNTDKGLSFLELKDQLLLFYLQDLTHLMLEKTNGKSIKGNPGILRLVELRTVLEKMRPIDQKLKYQIDKLVKAAVTGSLGENDPLRFKPNPQNLMSKLSEPDERESDSGEEGAEGGVAKKPQSKVKRYIPPRLAPVHYDDTEAEREHRIVERAKKLALSSSTIRELKEQYSDAPEEIREGRAYHMMRHDKEEQHRINHEESMMVRLNMTRKEKARKKRVLSMTSQLNSLTHFSDISALTGGEGRAEDMVPFMKKSKKGPKKSKKKKGFSRRRH</sequence>
<comment type="function">
    <text evidence="1 2">Part of the small subunit (SSU) processome, first precursor of the small eukaryotic ribosomal subunit. During the assembly of the SSU processome in the nucleolus, many ribosome biogenesis factors, an RNA chaperone and ribosomal proteins associate with the nascent pre-rRNA and work in concert to generate RNA folding, modifications, rearrangements and cleavage as well as targeted degradation of pre-ribosomal RNA by the RNA exosome. Its dissociation from the complex determines the transition from state pre-A1 to state pre-A1* (By similarity). May inhibit mRNA translation (By similarity).</text>
</comment>
<comment type="subunit">
    <text evidence="1">Part of the small subunit (SSU) processome, composed of more than 70 proteins and the RNA chaperone small nucleolar RNA (snoRNA) U3.</text>
</comment>
<comment type="subcellular location">
    <subcellularLocation>
        <location evidence="2">Nucleus</location>
    </subcellularLocation>
    <subcellularLocation>
        <location evidence="1">Nucleus</location>
        <location evidence="1">Nucleolus</location>
    </subcellularLocation>
    <subcellularLocation>
        <location evidence="1">Chromosome</location>
        <location evidence="1">Centromere</location>
    </subcellularLocation>
    <subcellularLocation>
        <location evidence="2">Cytoplasm</location>
    </subcellularLocation>
    <subcellularLocation>
        <location evidence="2">Cell projection</location>
        <location evidence="2">Axon</location>
    </subcellularLocation>
    <subcellularLocation>
        <location evidence="2">Cell projection</location>
        <location evidence="2">Dendrite</location>
    </subcellularLocation>
    <subcellularLocation>
        <location evidence="2">Cell projection</location>
        <location evidence="2">Filopodium</location>
    </subcellularLocation>
</comment>
<comment type="developmental stage">
    <text evidence="4">Expressed from the early tailbud stage (at protein level). Expressed in animal pole blastomeres of the four-cell embryo and in the neural crest and neural folds of the neurula stage embryo.</text>
</comment>
<comment type="similarity">
    <text evidence="5">Belongs to the SAS10 family.</text>
</comment>
<name>NGDNB_XENLA</name>
<feature type="chain" id="PRO_0000269249" description="Neuroguidin-B">
    <location>
        <begin position="1" status="less than"/>
        <end position="316"/>
    </location>
</feature>
<feature type="region of interest" description="Disordered" evidence="3">
    <location>
        <begin position="124"/>
        <end position="169"/>
    </location>
</feature>
<feature type="region of interest" description="Disordered" evidence="3">
    <location>
        <begin position="292"/>
        <end position="316"/>
    </location>
</feature>
<feature type="compositionally biased region" description="Acidic residues" evidence="3">
    <location>
        <begin position="145"/>
        <end position="156"/>
    </location>
</feature>
<feature type="compositionally biased region" description="Basic residues" evidence="3">
    <location>
        <begin position="296"/>
        <end position="316"/>
    </location>
</feature>
<feature type="non-terminal residue">
    <location>
        <position position="1"/>
    </location>
</feature>
<proteinExistence type="evidence at protein level"/>
<accession>Q5M985</accession>
<protein>
    <recommendedName>
        <fullName>Neuroguidin-B</fullName>
    </recommendedName>
    <alternativeName>
        <fullName>EIF4E-binding protein B</fullName>
    </alternativeName>
</protein>
<reference key="1">
    <citation type="submission" date="2004-12" db="EMBL/GenBank/DDBJ databases">
        <authorList>
            <consortium name="NIH - Xenopus Gene Collection (XGC) project"/>
        </authorList>
    </citation>
    <scope>NUCLEOTIDE SEQUENCE [LARGE SCALE MRNA]</scope>
    <source>
        <tissue>Testis</tissue>
    </source>
</reference>
<reference key="2">
    <citation type="journal article" date="2006" name="Mol. Cell. Biol.">
        <title>Translational control by neuroguidin, a eukaryotic initiation factor 4E and CPEB binding protein.</title>
        <authorList>
            <person name="Jung M.-Y."/>
            <person name="Lorenz L."/>
            <person name="Richter J.D."/>
        </authorList>
    </citation>
    <scope>DEVELOPMENTAL STAGE</scope>
</reference>